<protein>
    <recommendedName>
        <fullName evidence="1">Ubiquinone/menaquinone biosynthesis C-methyltransferase UbiE</fullName>
        <ecNumber evidence="1">2.1.1.163</ecNumber>
        <ecNumber evidence="1">2.1.1.201</ecNumber>
    </recommendedName>
    <alternativeName>
        <fullName evidence="1">2-methoxy-6-polyprenyl-1,4-benzoquinol methylase</fullName>
    </alternativeName>
    <alternativeName>
        <fullName evidence="1">Demethylmenaquinone methyltransferase</fullName>
    </alternativeName>
</protein>
<name>UBIE_SALEP</name>
<accession>B5QW73</accession>
<feature type="chain" id="PRO_1000187804" description="Ubiquinone/menaquinone biosynthesis C-methyltransferase UbiE">
    <location>
        <begin position="1"/>
        <end position="251"/>
    </location>
</feature>
<feature type="binding site" evidence="1">
    <location>
        <position position="74"/>
    </location>
    <ligand>
        <name>S-adenosyl-L-methionine</name>
        <dbReference type="ChEBI" id="CHEBI:59789"/>
    </ligand>
</feature>
<feature type="binding site" evidence="1">
    <location>
        <position position="95"/>
    </location>
    <ligand>
        <name>S-adenosyl-L-methionine</name>
        <dbReference type="ChEBI" id="CHEBI:59789"/>
    </ligand>
</feature>
<feature type="binding site" evidence="1">
    <location>
        <begin position="123"/>
        <end position="124"/>
    </location>
    <ligand>
        <name>S-adenosyl-L-methionine</name>
        <dbReference type="ChEBI" id="CHEBI:59789"/>
    </ligand>
</feature>
<feature type="binding site" evidence="1">
    <location>
        <position position="140"/>
    </location>
    <ligand>
        <name>S-adenosyl-L-methionine</name>
        <dbReference type="ChEBI" id="CHEBI:59789"/>
    </ligand>
</feature>
<proteinExistence type="inferred from homology"/>
<evidence type="ECO:0000255" key="1">
    <source>
        <dbReference type="HAMAP-Rule" id="MF_01813"/>
    </source>
</evidence>
<gene>
    <name evidence="1" type="primary">ubiE</name>
    <name type="ordered locus">SEN3765</name>
</gene>
<sequence>MVEDSQETTHFGFQTVAKEQKADMVAHVFHSVASKYDVMNDLMSFGIHRLWKRFTIDCSGVRRGQTVLDLAGGTGDLTAKFSRMVGETGKVILADINDSMLKMGREKLRNIGVIGNVEYVQANAEALPFPDNTFDCITISFGLRNVTEKEKALRSMFRVLKPGGRLLVLEFSKPIIEPLSKAYDAYSFHILPRIGSMVANDADSYRYLAESIRMHPDQDTLKAMMQDAGFESVDYYNLTAGVVALHRGYKF</sequence>
<reference key="1">
    <citation type="journal article" date="2008" name="Genome Res.">
        <title>Comparative genome analysis of Salmonella enteritidis PT4 and Salmonella gallinarum 287/91 provides insights into evolutionary and host adaptation pathways.</title>
        <authorList>
            <person name="Thomson N.R."/>
            <person name="Clayton D.J."/>
            <person name="Windhorst D."/>
            <person name="Vernikos G."/>
            <person name="Davidson S."/>
            <person name="Churcher C."/>
            <person name="Quail M.A."/>
            <person name="Stevens M."/>
            <person name="Jones M.A."/>
            <person name="Watson M."/>
            <person name="Barron A."/>
            <person name="Layton A."/>
            <person name="Pickard D."/>
            <person name="Kingsley R.A."/>
            <person name="Bignell A."/>
            <person name="Clark L."/>
            <person name="Harris B."/>
            <person name="Ormond D."/>
            <person name="Abdellah Z."/>
            <person name="Brooks K."/>
            <person name="Cherevach I."/>
            <person name="Chillingworth T."/>
            <person name="Woodward J."/>
            <person name="Norberczak H."/>
            <person name="Lord A."/>
            <person name="Arrowsmith C."/>
            <person name="Jagels K."/>
            <person name="Moule S."/>
            <person name="Mungall K."/>
            <person name="Saunders M."/>
            <person name="Whitehead S."/>
            <person name="Chabalgoity J.A."/>
            <person name="Maskell D."/>
            <person name="Humphreys T."/>
            <person name="Roberts M."/>
            <person name="Barrow P.A."/>
            <person name="Dougan G."/>
            <person name="Parkhill J."/>
        </authorList>
    </citation>
    <scope>NUCLEOTIDE SEQUENCE [LARGE SCALE GENOMIC DNA]</scope>
    <source>
        <strain>P125109</strain>
    </source>
</reference>
<comment type="function">
    <text evidence="1">Methyltransferase required for the conversion of demethylmenaquinol (DMKH2) to menaquinol (MKH2) and the conversion of 2-polyprenyl-6-methoxy-1,4-benzoquinol (DDMQH2) to 2-polyprenyl-3-methyl-6-methoxy-1,4-benzoquinol (DMQH2).</text>
</comment>
<comment type="catalytic activity">
    <reaction evidence="1">
        <text>a 2-demethylmenaquinol + S-adenosyl-L-methionine = a menaquinol + S-adenosyl-L-homocysteine + H(+)</text>
        <dbReference type="Rhea" id="RHEA:42640"/>
        <dbReference type="Rhea" id="RHEA-COMP:9539"/>
        <dbReference type="Rhea" id="RHEA-COMP:9563"/>
        <dbReference type="ChEBI" id="CHEBI:15378"/>
        <dbReference type="ChEBI" id="CHEBI:18151"/>
        <dbReference type="ChEBI" id="CHEBI:55437"/>
        <dbReference type="ChEBI" id="CHEBI:57856"/>
        <dbReference type="ChEBI" id="CHEBI:59789"/>
        <dbReference type="EC" id="2.1.1.163"/>
    </reaction>
</comment>
<comment type="catalytic activity">
    <reaction evidence="1">
        <text>a 2-methoxy-6-(all-trans-polyprenyl)benzene-1,4-diol + S-adenosyl-L-methionine = a 5-methoxy-2-methyl-3-(all-trans-polyprenyl)benzene-1,4-diol + S-adenosyl-L-homocysteine + H(+)</text>
        <dbReference type="Rhea" id="RHEA:28286"/>
        <dbReference type="Rhea" id="RHEA-COMP:10858"/>
        <dbReference type="Rhea" id="RHEA-COMP:10859"/>
        <dbReference type="ChEBI" id="CHEBI:15378"/>
        <dbReference type="ChEBI" id="CHEBI:57856"/>
        <dbReference type="ChEBI" id="CHEBI:59789"/>
        <dbReference type="ChEBI" id="CHEBI:84166"/>
        <dbReference type="ChEBI" id="CHEBI:84167"/>
        <dbReference type="EC" id="2.1.1.201"/>
    </reaction>
</comment>
<comment type="pathway">
    <text evidence="1">Quinol/quinone metabolism; menaquinone biosynthesis; menaquinol from 1,4-dihydroxy-2-naphthoate: step 2/2.</text>
</comment>
<comment type="pathway">
    <text evidence="1">Cofactor biosynthesis; ubiquinone biosynthesis.</text>
</comment>
<comment type="similarity">
    <text evidence="1">Belongs to the class I-like SAM-binding methyltransferase superfamily. MenG/UbiE family.</text>
</comment>
<organism>
    <name type="scientific">Salmonella enteritidis PT4 (strain P125109)</name>
    <dbReference type="NCBI Taxonomy" id="550537"/>
    <lineage>
        <taxon>Bacteria</taxon>
        <taxon>Pseudomonadati</taxon>
        <taxon>Pseudomonadota</taxon>
        <taxon>Gammaproteobacteria</taxon>
        <taxon>Enterobacterales</taxon>
        <taxon>Enterobacteriaceae</taxon>
        <taxon>Salmonella</taxon>
    </lineage>
</organism>
<keyword id="KW-0474">Menaquinone biosynthesis</keyword>
<keyword id="KW-0489">Methyltransferase</keyword>
<keyword id="KW-0949">S-adenosyl-L-methionine</keyword>
<keyword id="KW-0808">Transferase</keyword>
<keyword id="KW-0831">Ubiquinone biosynthesis</keyword>
<dbReference type="EC" id="2.1.1.163" evidence="1"/>
<dbReference type="EC" id="2.1.1.201" evidence="1"/>
<dbReference type="EMBL" id="AM933172">
    <property type="protein sequence ID" value="CAR35341.1"/>
    <property type="molecule type" value="Genomic_DNA"/>
</dbReference>
<dbReference type="RefSeq" id="WP_000229009.1">
    <property type="nucleotide sequence ID" value="NC_011294.1"/>
</dbReference>
<dbReference type="SMR" id="B5QW73"/>
<dbReference type="KEGG" id="set:SEN3765"/>
<dbReference type="HOGENOM" id="CLU_037990_0_0_6"/>
<dbReference type="UniPathway" id="UPA00079">
    <property type="reaction ID" value="UER00169"/>
</dbReference>
<dbReference type="UniPathway" id="UPA00232"/>
<dbReference type="Proteomes" id="UP000000613">
    <property type="component" value="Chromosome"/>
</dbReference>
<dbReference type="GO" id="GO:0008425">
    <property type="term" value="F:2-methoxy-6-polyprenyl-1,4-benzoquinol methyltransferase activity"/>
    <property type="evidence" value="ECO:0007669"/>
    <property type="project" value="UniProtKB-UniRule"/>
</dbReference>
<dbReference type="GO" id="GO:0043770">
    <property type="term" value="F:demethylmenaquinone methyltransferase activity"/>
    <property type="evidence" value="ECO:0007669"/>
    <property type="project" value="UniProtKB-UniRule"/>
</dbReference>
<dbReference type="GO" id="GO:0009060">
    <property type="term" value="P:aerobic respiration"/>
    <property type="evidence" value="ECO:0007669"/>
    <property type="project" value="UniProtKB-UniRule"/>
</dbReference>
<dbReference type="GO" id="GO:0009234">
    <property type="term" value="P:menaquinone biosynthetic process"/>
    <property type="evidence" value="ECO:0007669"/>
    <property type="project" value="UniProtKB-UniRule"/>
</dbReference>
<dbReference type="GO" id="GO:0032259">
    <property type="term" value="P:methylation"/>
    <property type="evidence" value="ECO:0007669"/>
    <property type="project" value="UniProtKB-KW"/>
</dbReference>
<dbReference type="CDD" id="cd02440">
    <property type="entry name" value="AdoMet_MTases"/>
    <property type="match status" value="1"/>
</dbReference>
<dbReference type="FunFam" id="3.40.50.150:FF:000014">
    <property type="entry name" value="Ubiquinone/menaquinone biosynthesis C-methyltransferase UbiE"/>
    <property type="match status" value="1"/>
</dbReference>
<dbReference type="Gene3D" id="3.40.50.150">
    <property type="entry name" value="Vaccinia Virus protein VP39"/>
    <property type="match status" value="1"/>
</dbReference>
<dbReference type="HAMAP" id="MF_01813">
    <property type="entry name" value="MenG_UbiE_methyltr"/>
    <property type="match status" value="1"/>
</dbReference>
<dbReference type="InterPro" id="IPR029063">
    <property type="entry name" value="SAM-dependent_MTases_sf"/>
</dbReference>
<dbReference type="InterPro" id="IPR004033">
    <property type="entry name" value="UbiE/COQ5_MeTrFase"/>
</dbReference>
<dbReference type="InterPro" id="IPR023576">
    <property type="entry name" value="UbiE/COQ5_MeTrFase_CS"/>
</dbReference>
<dbReference type="NCBIfam" id="TIGR01934">
    <property type="entry name" value="MenG_MenH_UbiE"/>
    <property type="match status" value="1"/>
</dbReference>
<dbReference type="NCBIfam" id="NF001240">
    <property type="entry name" value="PRK00216.1-1"/>
    <property type="match status" value="1"/>
</dbReference>
<dbReference type="NCBIfam" id="NF001242">
    <property type="entry name" value="PRK00216.1-3"/>
    <property type="match status" value="1"/>
</dbReference>
<dbReference type="NCBIfam" id="NF001244">
    <property type="entry name" value="PRK00216.1-5"/>
    <property type="match status" value="1"/>
</dbReference>
<dbReference type="PANTHER" id="PTHR43591:SF24">
    <property type="entry name" value="2-METHOXY-6-POLYPRENYL-1,4-BENZOQUINOL METHYLASE, MITOCHONDRIAL"/>
    <property type="match status" value="1"/>
</dbReference>
<dbReference type="PANTHER" id="PTHR43591">
    <property type="entry name" value="METHYLTRANSFERASE"/>
    <property type="match status" value="1"/>
</dbReference>
<dbReference type="Pfam" id="PF01209">
    <property type="entry name" value="Ubie_methyltran"/>
    <property type="match status" value="1"/>
</dbReference>
<dbReference type="SUPFAM" id="SSF53335">
    <property type="entry name" value="S-adenosyl-L-methionine-dependent methyltransferases"/>
    <property type="match status" value="1"/>
</dbReference>
<dbReference type="PROSITE" id="PS51608">
    <property type="entry name" value="SAM_MT_UBIE"/>
    <property type="match status" value="1"/>
</dbReference>
<dbReference type="PROSITE" id="PS01183">
    <property type="entry name" value="UBIE_1"/>
    <property type="match status" value="1"/>
</dbReference>
<dbReference type="PROSITE" id="PS01184">
    <property type="entry name" value="UBIE_2"/>
    <property type="match status" value="1"/>
</dbReference>